<name>ILVE_METJA</name>
<dbReference type="EC" id="2.6.1.42"/>
<dbReference type="EMBL" id="L77117">
    <property type="protein sequence ID" value="AAB99010.1"/>
    <property type="molecule type" value="Genomic_DNA"/>
</dbReference>
<dbReference type="PIR" id="G64425">
    <property type="entry name" value="G64425"/>
</dbReference>
<dbReference type="RefSeq" id="WP_010870521.1">
    <property type="nucleotide sequence ID" value="NC_000909.1"/>
</dbReference>
<dbReference type="SMR" id="Q58414"/>
<dbReference type="FunCoup" id="Q58414">
    <property type="interactions" value="227"/>
</dbReference>
<dbReference type="STRING" id="243232.MJ_1008"/>
<dbReference type="PaxDb" id="243232-MJ_1008"/>
<dbReference type="EnsemblBacteria" id="AAB99010">
    <property type="protein sequence ID" value="AAB99010"/>
    <property type="gene ID" value="MJ_1008"/>
</dbReference>
<dbReference type="GeneID" id="1451905"/>
<dbReference type="KEGG" id="mja:MJ_1008"/>
<dbReference type="eggNOG" id="arCOG02297">
    <property type="taxonomic scope" value="Archaea"/>
</dbReference>
<dbReference type="HOGENOM" id="CLU_020844_3_0_2"/>
<dbReference type="InParanoid" id="Q58414"/>
<dbReference type="OrthoDB" id="6469at2157"/>
<dbReference type="PhylomeDB" id="Q58414"/>
<dbReference type="UniPathway" id="UPA00047">
    <property type="reaction ID" value="UER00058"/>
</dbReference>
<dbReference type="UniPathway" id="UPA00048">
    <property type="reaction ID" value="UER00073"/>
</dbReference>
<dbReference type="UniPathway" id="UPA00049">
    <property type="reaction ID" value="UER00062"/>
</dbReference>
<dbReference type="Proteomes" id="UP000000805">
    <property type="component" value="Chromosome"/>
</dbReference>
<dbReference type="GO" id="GO:0052656">
    <property type="term" value="F:L-isoleucine-2-oxoglutarate transaminase activity"/>
    <property type="evidence" value="ECO:0007669"/>
    <property type="project" value="RHEA"/>
</dbReference>
<dbReference type="GO" id="GO:0052654">
    <property type="term" value="F:L-leucine-2-oxoglutarate transaminase activity"/>
    <property type="evidence" value="ECO:0007669"/>
    <property type="project" value="RHEA"/>
</dbReference>
<dbReference type="GO" id="GO:0052655">
    <property type="term" value="F:L-valine-2-oxoglutarate transaminase activity"/>
    <property type="evidence" value="ECO:0007669"/>
    <property type="project" value="RHEA"/>
</dbReference>
<dbReference type="GO" id="GO:0019752">
    <property type="term" value="P:carboxylic acid metabolic process"/>
    <property type="evidence" value="ECO:0000318"/>
    <property type="project" value="GO_Central"/>
</dbReference>
<dbReference type="GO" id="GO:0009097">
    <property type="term" value="P:isoleucine biosynthetic process"/>
    <property type="evidence" value="ECO:0007669"/>
    <property type="project" value="UniProtKB-UniPathway"/>
</dbReference>
<dbReference type="GO" id="GO:0009098">
    <property type="term" value="P:L-leucine biosynthetic process"/>
    <property type="evidence" value="ECO:0007669"/>
    <property type="project" value="UniProtKB-UniPathway"/>
</dbReference>
<dbReference type="GO" id="GO:0009099">
    <property type="term" value="P:L-valine biosynthetic process"/>
    <property type="evidence" value="ECO:0007669"/>
    <property type="project" value="UniProtKB-UniPathway"/>
</dbReference>
<dbReference type="CDD" id="cd01558">
    <property type="entry name" value="D-AAT_like"/>
    <property type="match status" value="1"/>
</dbReference>
<dbReference type="FunFam" id="3.30.470.10:FF:000006">
    <property type="entry name" value="Branched-chain-amino-acid aminotransferase"/>
    <property type="match status" value="1"/>
</dbReference>
<dbReference type="FunFam" id="3.20.10.10:FF:000002">
    <property type="entry name" value="D-alanine aminotransferase"/>
    <property type="match status" value="1"/>
</dbReference>
<dbReference type="Gene3D" id="3.30.470.10">
    <property type="match status" value="1"/>
</dbReference>
<dbReference type="Gene3D" id="3.20.10.10">
    <property type="entry name" value="D-amino Acid Aminotransferase, subunit A, domain 2"/>
    <property type="match status" value="1"/>
</dbReference>
<dbReference type="InterPro" id="IPR001544">
    <property type="entry name" value="Aminotrans_IV"/>
</dbReference>
<dbReference type="InterPro" id="IPR018300">
    <property type="entry name" value="Aminotrans_IV_CS"/>
</dbReference>
<dbReference type="InterPro" id="IPR036038">
    <property type="entry name" value="Aminotransferase-like"/>
</dbReference>
<dbReference type="InterPro" id="IPR005785">
    <property type="entry name" value="B_amino_transI"/>
</dbReference>
<dbReference type="InterPro" id="IPR043132">
    <property type="entry name" value="BCAT-like_C"/>
</dbReference>
<dbReference type="InterPro" id="IPR043131">
    <property type="entry name" value="BCAT-like_N"/>
</dbReference>
<dbReference type="InterPro" id="IPR050571">
    <property type="entry name" value="Class-IV_PLP-Dep_Aminotrnsfr"/>
</dbReference>
<dbReference type="NCBIfam" id="TIGR01122">
    <property type="entry name" value="ilvE_I"/>
    <property type="match status" value="1"/>
</dbReference>
<dbReference type="NCBIfam" id="NF005146">
    <property type="entry name" value="PRK06606.1"/>
    <property type="match status" value="1"/>
</dbReference>
<dbReference type="NCBIfam" id="NF006185">
    <property type="entry name" value="PRK08320.1"/>
    <property type="match status" value="1"/>
</dbReference>
<dbReference type="PANTHER" id="PTHR42743">
    <property type="entry name" value="AMINO-ACID AMINOTRANSFERASE"/>
    <property type="match status" value="1"/>
</dbReference>
<dbReference type="PANTHER" id="PTHR42743:SF11">
    <property type="entry name" value="AMINODEOXYCHORISMATE LYASE"/>
    <property type="match status" value="1"/>
</dbReference>
<dbReference type="Pfam" id="PF01063">
    <property type="entry name" value="Aminotran_4"/>
    <property type="match status" value="1"/>
</dbReference>
<dbReference type="SUPFAM" id="SSF56752">
    <property type="entry name" value="D-aminoacid aminotransferase-like PLP-dependent enzymes"/>
    <property type="match status" value="1"/>
</dbReference>
<dbReference type="PROSITE" id="PS00770">
    <property type="entry name" value="AA_TRANSFER_CLASS_4"/>
    <property type="match status" value="1"/>
</dbReference>
<evidence type="ECO:0000250" key="1"/>
<evidence type="ECO:0000255" key="2"/>
<evidence type="ECO:0000305" key="3"/>
<reference key="1">
    <citation type="journal article" date="1996" name="Science">
        <title>Complete genome sequence of the methanogenic archaeon, Methanococcus jannaschii.</title>
        <authorList>
            <person name="Bult C.J."/>
            <person name="White O."/>
            <person name="Olsen G.J."/>
            <person name="Zhou L."/>
            <person name="Fleischmann R.D."/>
            <person name="Sutton G.G."/>
            <person name="Blake J.A."/>
            <person name="FitzGerald L.M."/>
            <person name="Clayton R.A."/>
            <person name="Gocayne J.D."/>
            <person name="Kerlavage A.R."/>
            <person name="Dougherty B.A."/>
            <person name="Tomb J.-F."/>
            <person name="Adams M.D."/>
            <person name="Reich C.I."/>
            <person name="Overbeek R."/>
            <person name="Kirkness E.F."/>
            <person name="Weinstock K.G."/>
            <person name="Merrick J.M."/>
            <person name="Glodek A."/>
            <person name="Scott J.L."/>
            <person name="Geoghagen N.S.M."/>
            <person name="Weidman J.F."/>
            <person name="Fuhrmann J.L."/>
            <person name="Nguyen D."/>
            <person name="Utterback T.R."/>
            <person name="Kelley J.M."/>
            <person name="Peterson J.D."/>
            <person name="Sadow P.W."/>
            <person name="Hanna M.C."/>
            <person name="Cotton M.D."/>
            <person name="Roberts K.M."/>
            <person name="Hurst M.A."/>
            <person name="Kaine B.P."/>
            <person name="Borodovsky M."/>
            <person name="Klenk H.-P."/>
            <person name="Fraser C.M."/>
            <person name="Smith H.O."/>
            <person name="Woese C.R."/>
            <person name="Venter J.C."/>
        </authorList>
    </citation>
    <scope>NUCLEOTIDE SEQUENCE [LARGE SCALE GENOMIC DNA]</scope>
    <source>
        <strain>ATCC 43067 / DSM 2661 / JAL-1 / JCM 10045 / NBRC 100440</strain>
    </source>
</reference>
<comment type="function">
    <text evidence="1">Acts on leucine, isoleucine and valine.</text>
</comment>
<comment type="catalytic activity">
    <reaction>
        <text>L-leucine + 2-oxoglutarate = 4-methyl-2-oxopentanoate + L-glutamate</text>
        <dbReference type="Rhea" id="RHEA:18321"/>
        <dbReference type="ChEBI" id="CHEBI:16810"/>
        <dbReference type="ChEBI" id="CHEBI:17865"/>
        <dbReference type="ChEBI" id="CHEBI:29985"/>
        <dbReference type="ChEBI" id="CHEBI:57427"/>
        <dbReference type="EC" id="2.6.1.42"/>
    </reaction>
</comment>
<comment type="catalytic activity">
    <reaction>
        <text>L-isoleucine + 2-oxoglutarate = (S)-3-methyl-2-oxopentanoate + L-glutamate</text>
        <dbReference type="Rhea" id="RHEA:24801"/>
        <dbReference type="ChEBI" id="CHEBI:16810"/>
        <dbReference type="ChEBI" id="CHEBI:29985"/>
        <dbReference type="ChEBI" id="CHEBI:35146"/>
        <dbReference type="ChEBI" id="CHEBI:58045"/>
        <dbReference type="EC" id="2.6.1.42"/>
    </reaction>
</comment>
<comment type="catalytic activity">
    <reaction>
        <text>L-valine + 2-oxoglutarate = 3-methyl-2-oxobutanoate + L-glutamate</text>
        <dbReference type="Rhea" id="RHEA:24813"/>
        <dbReference type="ChEBI" id="CHEBI:11851"/>
        <dbReference type="ChEBI" id="CHEBI:16810"/>
        <dbReference type="ChEBI" id="CHEBI:29985"/>
        <dbReference type="ChEBI" id="CHEBI:57762"/>
        <dbReference type="EC" id="2.6.1.42"/>
    </reaction>
</comment>
<comment type="cofactor">
    <cofactor evidence="1">
        <name>pyridoxal 5'-phosphate</name>
        <dbReference type="ChEBI" id="CHEBI:597326"/>
    </cofactor>
</comment>
<comment type="pathway">
    <text>Amino-acid biosynthesis; L-isoleucine biosynthesis; L-isoleucine from 2-oxobutanoate: step 4/4.</text>
</comment>
<comment type="pathway">
    <text>Amino-acid biosynthesis; L-leucine biosynthesis; L-leucine from 3-methyl-2-oxobutanoate: step 4/4.</text>
</comment>
<comment type="pathway">
    <text>Amino-acid biosynthesis; L-valine biosynthesis; L-valine from pyruvate: step 4/4.</text>
</comment>
<comment type="similarity">
    <text evidence="3">Belongs to the class-IV pyridoxal-phosphate-dependent aminotransferase family.</text>
</comment>
<protein>
    <recommendedName>
        <fullName>Putative branched-chain-amino-acid aminotransferase</fullName>
        <shortName>BCAT</shortName>
        <ecNumber>2.6.1.42</ecNumber>
    </recommendedName>
    <alternativeName>
        <fullName>Transaminase B</fullName>
    </alternativeName>
</protein>
<gene>
    <name type="primary">ilvE</name>
    <name type="ordered locus">MJ1008</name>
</gene>
<keyword id="KW-0028">Amino-acid biosynthesis</keyword>
<keyword id="KW-0032">Aminotransferase</keyword>
<keyword id="KW-0100">Branched-chain amino acid biosynthesis</keyword>
<keyword id="KW-0663">Pyridoxal phosphate</keyword>
<keyword id="KW-1185">Reference proteome</keyword>
<keyword id="KW-0808">Transferase</keyword>
<sequence>MKIYLNGKFVDEKDAKVSVFDHGLLYGDGVFEGIRAYDGVVFMLKEHIDRLYDSAKSLCIDIPLTKEEMIDVVLETLRVNNLRDAYIRLVVTRGVGDLGLDPRKCGKPTIFCIAIPMPPLLGEDGIRAITVSVRRLPVDVLNPAVKSLNYLNSVLAKIQANYAGVDEAFLLDDKGFVVEGTGDNIFIVKNGVLKTPPVYQSILKGITRDVVIKLAKEEGIEVVEEPLTLHDLYTADELFITGTAAEIVPVFEIDGRVINNKQVGEITKKLKEKFKDIRTKWGIKVYDE</sequence>
<organism>
    <name type="scientific">Methanocaldococcus jannaschii (strain ATCC 43067 / DSM 2661 / JAL-1 / JCM 10045 / NBRC 100440)</name>
    <name type="common">Methanococcus jannaschii</name>
    <dbReference type="NCBI Taxonomy" id="243232"/>
    <lineage>
        <taxon>Archaea</taxon>
        <taxon>Methanobacteriati</taxon>
        <taxon>Methanobacteriota</taxon>
        <taxon>Methanomada group</taxon>
        <taxon>Methanococci</taxon>
        <taxon>Methanococcales</taxon>
        <taxon>Methanocaldococcaceae</taxon>
        <taxon>Methanocaldococcus</taxon>
    </lineage>
</organism>
<feature type="chain" id="PRO_0000103290" description="Putative branched-chain-amino-acid aminotransferase">
    <location>
        <begin position="1"/>
        <end position="288"/>
    </location>
</feature>
<feature type="modified residue" description="N6-(pyridoxal phosphate)lysine" evidence="2">
    <location>
        <position position="146"/>
    </location>
</feature>
<accession>Q58414</accession>
<proteinExistence type="inferred from homology"/>